<comment type="function">
    <text evidence="1">Escorts unspliced or incompletely spliced viral pre-mRNAs (late transcripts) out of the nucleus of infected cells. These pre-mRNAs carry a recognition sequence called Rev responsive element (RRE) located in the env gene, that is not present in fully spliced viral mRNAs (early transcripts). This function is essential since most viral proteins are translated from unspliced or partially spliced pre-mRNAs which cannot exit the nucleus by the pathway used by fully processed cellular mRNAs. Rev itself is translated from a fully spliced mRNA that readily exits the nucleus. Rev's nuclear localization signal (NLS) binds directly to KPNB1/Importin beta-1 without previous binding to KPNA1/Importin alpha-1. KPNB1 binds to the GDP bound form of RAN (Ran-GDP) and targets Rev to the nucleus. In the nucleus, the conversion from Ran-GDP to Ran-GTP dissociates Rev from KPNB1 and allows Rev's binding to the RRE in viral pre-mRNAs. Rev multimerization on the RRE via cooperative assembly exposes its nuclear export signal (NES) to the surface. Rev can then form a complex with XPO1/CRM1 and Ran-GTP, leading to nuclear export of the complex. Conversion from Ran-GTP to Ran-GDP mediates dissociation of the Rev/RRE/XPO1/RAN complex, so that Rev can return to the nucleus for a subsequent round of export. Beside KPNB1, also seems to interact with TNPO1/Transportin-1, RANBP5/IPO5 and IPO7/RANBP7 for nuclear import. The nucleoporin-like HRB/RIP is an essential cofactor that probably indirectly interacts with Rev to release HIV RNAs from the perinuclear region to the cytoplasm.</text>
</comment>
<comment type="subunit">
    <text evidence="1">Homomultimer; when bound to the RRE. Multimeric assembly is essential for activity and may involve XPO1. Binds to human KPNB1, XPO1, TNPO1, RANBP5 and IPO7. Interacts with the viral Integrase. Interacts with human KHDRBS1. Interacts with human NAP1; this interaction decreases Rev multimerization and stimulates its activity. Interacts with human DEAD-box helicases DDX3 and DDX24; these interactions may serve for viral RNA export to the cytoplasm and packaging, respectively. Interacts with human PSIP1; this interaction may inhibit HIV-1 DNA integration by promoting dissociation of the Integrase-LEDGF/p75 complex.</text>
</comment>
<comment type="subcellular location">
    <subcellularLocation>
        <location evidence="1">Host nucleus</location>
        <location evidence="1">Host nucleolus</location>
    </subcellularLocation>
    <subcellularLocation>
        <location evidence="1">Host cytoplasm</location>
    </subcellularLocation>
    <text evidence="1">The presence of both nuclear import and nuclear export signals leads to continuous shuttling between the nucleus and cytoplasm.</text>
</comment>
<comment type="domain">
    <text evidence="1">The RNA-binding motif binds to the RRE, a 240 bp stem-and-loop structure present in incompletely spliced viral pre-mRNAs. This region also contains the NLS which mediates nuclear localization via KPNB1 binding and, when the N-terminal sequence is present, nucleolar targeting. These overlapping functions prevent Rev bound to RRE from undesirable return to the nucleus. When Rev binds the RRE, the NLS becomes masked while the NES remains accessible. The leucine-rich NES mediates binding to human XPO1.</text>
</comment>
<comment type="PTM">
    <text evidence="1">Asymmetrically arginine dimethylated at one site by host PRMT6. Methylation impairs the RNA-binding activity and export of viral RNA from the nucleus to the cytoplasm.</text>
</comment>
<comment type="PTM">
    <text evidence="1">Phosphorylated by protein kinase CK2. Presence of, and maybe binding to the N-terminus of the regulatory beta subunit of CK2 is necessary for CK2-mediated Rev's phosphorylation.</text>
</comment>
<comment type="miscellaneous">
    <text evidence="1">HIV-1 lineages are divided in three main groups, M (for Major), O (for Outlier), and N (for New, or Non-M, Non-O). The vast majority of strains found worldwide belong to the group M. Group O seems to be endemic to and largely confined to Cameroon and neighboring countries in West Central Africa, where these viruses represent a small minority of HIV-1 strains. The group N is represented by a limited number of isolates from Cameroonian persons. The group M is further subdivided in 9 clades or subtypes (A to D, F to H, J and K).</text>
</comment>
<comment type="similarity">
    <text evidence="1">Belongs to the HIV-1 REV protein family.</text>
</comment>
<keyword id="KW-0014">AIDS</keyword>
<keyword id="KW-1035">Host cytoplasm</keyword>
<keyword id="KW-1048">Host nucleus</keyword>
<keyword id="KW-0945">Host-virus interaction</keyword>
<keyword id="KW-0488">Methylation</keyword>
<keyword id="KW-0509">mRNA transport</keyword>
<keyword id="KW-0597">Phosphoprotein</keyword>
<keyword id="KW-0694">RNA-binding</keyword>
<keyword id="KW-0813">Transport</keyword>
<name>REV_HV1Z2</name>
<proteinExistence type="inferred from homology"/>
<feature type="chain" id="PRO_0000085257" description="Protein Rev">
    <location>
        <begin position="1"/>
        <end position="118"/>
    </location>
</feature>
<feature type="region of interest" description="Homomultimerization" evidence="1">
    <location>
        <begin position="18"/>
        <end position="26"/>
    </location>
</feature>
<feature type="region of interest" description="Disordered" evidence="2">
    <location>
        <begin position="23"/>
        <end position="49"/>
    </location>
</feature>
<feature type="region of interest" description="Disordered" evidence="2">
    <location>
        <begin position="89"/>
        <end position="118"/>
    </location>
</feature>
<feature type="short sequence motif" description="Nuclear localization signal and RNA-binding (RRE)" evidence="1">
    <location>
        <begin position="34"/>
        <end position="50"/>
    </location>
</feature>
<feature type="short sequence motif" description="Nuclear export signal and binding to XPO1" evidence="1">
    <location>
        <begin position="73"/>
        <end position="84"/>
    </location>
</feature>
<feature type="compositionally biased region" description="Basic residues" evidence="2">
    <location>
        <begin position="36"/>
        <end position="49"/>
    </location>
</feature>
<feature type="compositionally biased region" description="Polar residues" evidence="2">
    <location>
        <begin position="92"/>
        <end position="112"/>
    </location>
</feature>
<feature type="modified residue" description="Phosphoserine; by host CK2" evidence="1">
    <location>
        <position position="5"/>
    </location>
</feature>
<feature type="modified residue" description="Phosphoserine; by host" evidence="1">
    <location>
        <position position="92"/>
    </location>
</feature>
<feature type="modified residue" description="Phosphoserine; by host" evidence="1">
    <location>
        <position position="99"/>
    </location>
</feature>
<organism>
    <name type="scientific">Human immunodeficiency virus type 1 group M subtype D (isolate Z2/CDC-Z34)</name>
    <name type="common">HIV-1</name>
    <dbReference type="NCBI Taxonomy" id="11683"/>
    <lineage>
        <taxon>Viruses</taxon>
        <taxon>Riboviria</taxon>
        <taxon>Pararnavirae</taxon>
        <taxon>Artverviricota</taxon>
        <taxon>Revtraviricetes</taxon>
        <taxon>Ortervirales</taxon>
        <taxon>Retroviridae</taxon>
        <taxon>Orthoretrovirinae</taxon>
        <taxon>Lentivirus</taxon>
        <taxon>Human immunodeficiency virus type 1</taxon>
    </lineage>
</organism>
<evidence type="ECO:0000255" key="1">
    <source>
        <dbReference type="HAMAP-Rule" id="MF_04077"/>
    </source>
</evidence>
<evidence type="ECO:0000256" key="2">
    <source>
        <dbReference type="SAM" id="MobiDB-lite"/>
    </source>
</evidence>
<protein>
    <recommendedName>
        <fullName evidence="1">Protein Rev</fullName>
    </recommendedName>
    <alternativeName>
        <fullName evidence="1">ART/TRS</fullName>
    </alternativeName>
    <alternativeName>
        <fullName evidence="1">Anti-repression transactivator</fullName>
    </alternativeName>
    <alternativeName>
        <fullName evidence="1">Regulator of expression of viral proteins</fullName>
    </alternativeName>
</protein>
<reference key="1">
    <citation type="submission" date="1989-07" db="EMBL/GenBank/DDBJ databases">
        <authorList>
            <person name="Theodore T."/>
            <person name="Buckler-White A.J."/>
        </authorList>
    </citation>
    <scope>NUCLEOTIDE SEQUENCE [GENOMIC RNA]</scope>
</reference>
<reference key="2">
    <citation type="journal article" date="1999" name="Arch. Biochem. Biophys.">
        <title>The ins and outs of HIV Rev.</title>
        <authorList>
            <person name="Hope T.J."/>
        </authorList>
    </citation>
    <scope>REVIEW</scope>
</reference>
<accession>P12483</accession>
<sequence length="118" mass="13206">MAGRSGDRDEDLLKAVRLIKILYQSNPPPSPEGTRQARRNRRRRWRARQRQIHSIGERILSTYLGRSEEPVPLQLPPLERLNLNCSEDCGASGTQGVGSPQISVESPTVLESGTEEQC</sequence>
<dbReference type="EMBL" id="M22639">
    <property type="protein sequence ID" value="AAA45364.1"/>
    <property type="molecule type" value="Genomic_RNA"/>
</dbReference>
<dbReference type="PIR" id="S54382">
    <property type="entry name" value="S54382"/>
</dbReference>
<dbReference type="SMR" id="P12483"/>
<dbReference type="Proteomes" id="UP000155099">
    <property type="component" value="Genome"/>
</dbReference>
<dbReference type="GO" id="GO:0030430">
    <property type="term" value="C:host cell cytoplasm"/>
    <property type="evidence" value="ECO:0007669"/>
    <property type="project" value="UniProtKB-SubCell"/>
</dbReference>
<dbReference type="GO" id="GO:0044196">
    <property type="term" value="C:host cell nucleolus"/>
    <property type="evidence" value="ECO:0007669"/>
    <property type="project" value="UniProtKB-SubCell"/>
</dbReference>
<dbReference type="GO" id="GO:0003700">
    <property type="term" value="F:DNA-binding transcription factor activity"/>
    <property type="evidence" value="ECO:0007669"/>
    <property type="project" value="UniProtKB-UniRule"/>
</dbReference>
<dbReference type="GO" id="GO:0003723">
    <property type="term" value="F:RNA binding"/>
    <property type="evidence" value="ECO:0007669"/>
    <property type="project" value="UniProtKB-UniRule"/>
</dbReference>
<dbReference type="GO" id="GO:0051028">
    <property type="term" value="P:mRNA transport"/>
    <property type="evidence" value="ECO:0007669"/>
    <property type="project" value="UniProtKB-UniRule"/>
</dbReference>
<dbReference type="GO" id="GO:0016032">
    <property type="term" value="P:viral process"/>
    <property type="evidence" value="ECO:0007669"/>
    <property type="project" value="UniProtKB-UniRule"/>
</dbReference>
<dbReference type="Gene3D" id="6.10.140.630">
    <property type="match status" value="1"/>
</dbReference>
<dbReference type="HAMAP" id="MF_04077">
    <property type="entry name" value="REV_HIV1"/>
    <property type="match status" value="1"/>
</dbReference>
<dbReference type="InterPro" id="IPR000625">
    <property type="entry name" value="REV_protein"/>
</dbReference>
<dbReference type="Pfam" id="PF00424">
    <property type="entry name" value="REV"/>
    <property type="match status" value="1"/>
</dbReference>
<organismHost>
    <name type="scientific">Homo sapiens</name>
    <name type="common">Human</name>
    <dbReference type="NCBI Taxonomy" id="9606"/>
</organismHost>
<gene>
    <name evidence="1" type="primary">rev</name>
</gene>